<sequence>MVELQELYKKTITPALQKEFGFKSVMAVPRLEKITLNMGLGEAVADKKVIERAMDDMIKISGQKPLITYARKSEAGFKIRAGWPIGCKVTLRRDRMYEFLKRLISIAIPRIRDFRGLSPKSFDGRGNYSLGIREQIVFPEIQYDKVDAIRGMDITITTTARTDEEGRALLKAFGFPLKDESR</sequence>
<accession>A9KD19</accession>
<keyword id="KW-0687">Ribonucleoprotein</keyword>
<keyword id="KW-0689">Ribosomal protein</keyword>
<keyword id="KW-0694">RNA-binding</keyword>
<keyword id="KW-0699">rRNA-binding</keyword>
<keyword id="KW-0820">tRNA-binding</keyword>
<reference key="1">
    <citation type="journal article" date="2009" name="Infect. Immun.">
        <title>Comparative genomics reveal extensive transposon-mediated genomic plasticity and diversity among potential effector proteins within the genus Coxiella.</title>
        <authorList>
            <person name="Beare P.A."/>
            <person name="Unsworth N."/>
            <person name="Andoh M."/>
            <person name="Voth D.E."/>
            <person name="Omsland A."/>
            <person name="Gilk S.D."/>
            <person name="Williams K.P."/>
            <person name="Sobral B.W."/>
            <person name="Kupko J.J. III"/>
            <person name="Porcella S.F."/>
            <person name="Samuel J.E."/>
            <person name="Heinzen R.A."/>
        </authorList>
    </citation>
    <scope>NUCLEOTIDE SEQUENCE [LARGE SCALE GENOMIC DNA]</scope>
    <source>
        <strain>Dugway 5J108-111</strain>
    </source>
</reference>
<evidence type="ECO:0000255" key="1">
    <source>
        <dbReference type="HAMAP-Rule" id="MF_01333"/>
    </source>
</evidence>
<evidence type="ECO:0000305" key="2"/>
<feature type="chain" id="PRO_1000086586" description="Large ribosomal subunit protein uL5">
    <location>
        <begin position="1"/>
        <end position="182"/>
    </location>
</feature>
<comment type="function">
    <text evidence="1">This is one of the proteins that bind and probably mediate the attachment of the 5S RNA into the large ribosomal subunit, where it forms part of the central protuberance. In the 70S ribosome it contacts protein S13 of the 30S subunit (bridge B1b), connecting the 2 subunits; this bridge is implicated in subunit movement. Contacts the P site tRNA; the 5S rRNA and some of its associated proteins might help stabilize positioning of ribosome-bound tRNAs.</text>
</comment>
<comment type="subunit">
    <text evidence="1">Part of the 50S ribosomal subunit; part of the 5S rRNA/L5/L18/L25 subcomplex. Contacts the 5S rRNA and the P site tRNA. Forms a bridge to the 30S subunit in the 70S ribosome.</text>
</comment>
<comment type="similarity">
    <text evidence="1">Belongs to the universal ribosomal protein uL5 family.</text>
</comment>
<organism>
    <name type="scientific">Coxiella burnetii (strain Dugway 5J108-111)</name>
    <dbReference type="NCBI Taxonomy" id="434922"/>
    <lineage>
        <taxon>Bacteria</taxon>
        <taxon>Pseudomonadati</taxon>
        <taxon>Pseudomonadota</taxon>
        <taxon>Gammaproteobacteria</taxon>
        <taxon>Legionellales</taxon>
        <taxon>Coxiellaceae</taxon>
        <taxon>Coxiella</taxon>
    </lineage>
</organism>
<dbReference type="EMBL" id="CP000733">
    <property type="protein sequence ID" value="ABS78080.1"/>
    <property type="molecule type" value="Genomic_DNA"/>
</dbReference>
<dbReference type="RefSeq" id="WP_010957461.1">
    <property type="nucleotide sequence ID" value="NC_009727.1"/>
</dbReference>
<dbReference type="SMR" id="A9KD19"/>
<dbReference type="KEGG" id="cbd:CBUD_1842"/>
<dbReference type="HOGENOM" id="CLU_061015_2_1_6"/>
<dbReference type="Proteomes" id="UP000008555">
    <property type="component" value="Chromosome"/>
</dbReference>
<dbReference type="GO" id="GO:1990904">
    <property type="term" value="C:ribonucleoprotein complex"/>
    <property type="evidence" value="ECO:0007669"/>
    <property type="project" value="UniProtKB-KW"/>
</dbReference>
<dbReference type="GO" id="GO:0005840">
    <property type="term" value="C:ribosome"/>
    <property type="evidence" value="ECO:0007669"/>
    <property type="project" value="UniProtKB-KW"/>
</dbReference>
<dbReference type="GO" id="GO:0019843">
    <property type="term" value="F:rRNA binding"/>
    <property type="evidence" value="ECO:0007669"/>
    <property type="project" value="UniProtKB-UniRule"/>
</dbReference>
<dbReference type="GO" id="GO:0003735">
    <property type="term" value="F:structural constituent of ribosome"/>
    <property type="evidence" value="ECO:0007669"/>
    <property type="project" value="InterPro"/>
</dbReference>
<dbReference type="GO" id="GO:0000049">
    <property type="term" value="F:tRNA binding"/>
    <property type="evidence" value="ECO:0007669"/>
    <property type="project" value="UniProtKB-UniRule"/>
</dbReference>
<dbReference type="GO" id="GO:0006412">
    <property type="term" value="P:translation"/>
    <property type="evidence" value="ECO:0007669"/>
    <property type="project" value="UniProtKB-UniRule"/>
</dbReference>
<dbReference type="FunFam" id="3.30.1440.10:FF:000001">
    <property type="entry name" value="50S ribosomal protein L5"/>
    <property type="match status" value="1"/>
</dbReference>
<dbReference type="Gene3D" id="3.30.1440.10">
    <property type="match status" value="1"/>
</dbReference>
<dbReference type="HAMAP" id="MF_01333_B">
    <property type="entry name" value="Ribosomal_uL5_B"/>
    <property type="match status" value="1"/>
</dbReference>
<dbReference type="InterPro" id="IPR002132">
    <property type="entry name" value="Ribosomal_uL5"/>
</dbReference>
<dbReference type="InterPro" id="IPR020930">
    <property type="entry name" value="Ribosomal_uL5_bac-type"/>
</dbReference>
<dbReference type="InterPro" id="IPR031309">
    <property type="entry name" value="Ribosomal_uL5_C"/>
</dbReference>
<dbReference type="InterPro" id="IPR020929">
    <property type="entry name" value="Ribosomal_uL5_CS"/>
</dbReference>
<dbReference type="InterPro" id="IPR022803">
    <property type="entry name" value="Ribosomal_uL5_dom_sf"/>
</dbReference>
<dbReference type="InterPro" id="IPR031310">
    <property type="entry name" value="Ribosomal_uL5_N"/>
</dbReference>
<dbReference type="NCBIfam" id="NF000585">
    <property type="entry name" value="PRK00010.1"/>
    <property type="match status" value="1"/>
</dbReference>
<dbReference type="PANTHER" id="PTHR11994">
    <property type="entry name" value="60S RIBOSOMAL PROTEIN L11-RELATED"/>
    <property type="match status" value="1"/>
</dbReference>
<dbReference type="Pfam" id="PF00281">
    <property type="entry name" value="Ribosomal_L5"/>
    <property type="match status" value="1"/>
</dbReference>
<dbReference type="Pfam" id="PF00673">
    <property type="entry name" value="Ribosomal_L5_C"/>
    <property type="match status" value="1"/>
</dbReference>
<dbReference type="PIRSF" id="PIRSF002161">
    <property type="entry name" value="Ribosomal_L5"/>
    <property type="match status" value="1"/>
</dbReference>
<dbReference type="SUPFAM" id="SSF55282">
    <property type="entry name" value="RL5-like"/>
    <property type="match status" value="1"/>
</dbReference>
<dbReference type="PROSITE" id="PS00358">
    <property type="entry name" value="RIBOSOMAL_L5"/>
    <property type="match status" value="1"/>
</dbReference>
<name>RL5_COXBN</name>
<proteinExistence type="inferred from homology"/>
<gene>
    <name evidence="1" type="primary">rplE</name>
    <name type="ordered locus">CBUD_1842</name>
</gene>
<protein>
    <recommendedName>
        <fullName evidence="1">Large ribosomal subunit protein uL5</fullName>
    </recommendedName>
    <alternativeName>
        <fullName evidence="2">50S ribosomal protein L5</fullName>
    </alternativeName>
</protein>